<dbReference type="EC" id="2.3.1.191" evidence="1"/>
<dbReference type="EMBL" id="CP000510">
    <property type="protein sequence ID" value="ABM04668.1"/>
    <property type="molecule type" value="Genomic_DNA"/>
</dbReference>
<dbReference type="RefSeq" id="WP_011771222.1">
    <property type="nucleotide sequence ID" value="NC_008709.1"/>
</dbReference>
<dbReference type="SMR" id="A1SYV3"/>
<dbReference type="STRING" id="357804.Ping_2966"/>
<dbReference type="KEGG" id="pin:Ping_2966"/>
<dbReference type="eggNOG" id="COG1044">
    <property type="taxonomic scope" value="Bacteria"/>
</dbReference>
<dbReference type="HOGENOM" id="CLU_049865_0_1_6"/>
<dbReference type="OrthoDB" id="9784739at2"/>
<dbReference type="UniPathway" id="UPA00973"/>
<dbReference type="Proteomes" id="UP000000639">
    <property type="component" value="Chromosome"/>
</dbReference>
<dbReference type="GO" id="GO:0016020">
    <property type="term" value="C:membrane"/>
    <property type="evidence" value="ECO:0007669"/>
    <property type="project" value="GOC"/>
</dbReference>
<dbReference type="GO" id="GO:0016410">
    <property type="term" value="F:N-acyltransferase activity"/>
    <property type="evidence" value="ECO:0007669"/>
    <property type="project" value="InterPro"/>
</dbReference>
<dbReference type="GO" id="GO:0009245">
    <property type="term" value="P:lipid A biosynthetic process"/>
    <property type="evidence" value="ECO:0007669"/>
    <property type="project" value="UniProtKB-UniRule"/>
</dbReference>
<dbReference type="CDD" id="cd03352">
    <property type="entry name" value="LbH_LpxD"/>
    <property type="match status" value="1"/>
</dbReference>
<dbReference type="Gene3D" id="1.20.5.170">
    <property type="match status" value="1"/>
</dbReference>
<dbReference type="Gene3D" id="2.160.10.10">
    <property type="entry name" value="Hexapeptide repeat proteins"/>
    <property type="match status" value="1"/>
</dbReference>
<dbReference type="Gene3D" id="3.40.1390.10">
    <property type="entry name" value="MurE/MurF, N-terminal domain"/>
    <property type="match status" value="1"/>
</dbReference>
<dbReference type="HAMAP" id="MF_00523">
    <property type="entry name" value="LpxD"/>
    <property type="match status" value="1"/>
</dbReference>
<dbReference type="InterPro" id="IPR001451">
    <property type="entry name" value="Hexapep"/>
</dbReference>
<dbReference type="InterPro" id="IPR018357">
    <property type="entry name" value="Hexapep_transf_CS"/>
</dbReference>
<dbReference type="InterPro" id="IPR007691">
    <property type="entry name" value="LpxD"/>
</dbReference>
<dbReference type="InterPro" id="IPR011004">
    <property type="entry name" value="Trimer_LpxA-like_sf"/>
</dbReference>
<dbReference type="InterPro" id="IPR020573">
    <property type="entry name" value="UDP_GlcNAc_AcTrfase_non-rep"/>
</dbReference>
<dbReference type="NCBIfam" id="TIGR01853">
    <property type="entry name" value="lipid_A_lpxD"/>
    <property type="match status" value="1"/>
</dbReference>
<dbReference type="NCBIfam" id="NF002060">
    <property type="entry name" value="PRK00892.1"/>
    <property type="match status" value="1"/>
</dbReference>
<dbReference type="PANTHER" id="PTHR43378">
    <property type="entry name" value="UDP-3-O-ACYLGLUCOSAMINE N-ACYLTRANSFERASE"/>
    <property type="match status" value="1"/>
</dbReference>
<dbReference type="PANTHER" id="PTHR43378:SF2">
    <property type="entry name" value="UDP-3-O-ACYLGLUCOSAMINE N-ACYLTRANSFERASE 1, MITOCHONDRIAL-RELATED"/>
    <property type="match status" value="1"/>
</dbReference>
<dbReference type="Pfam" id="PF00132">
    <property type="entry name" value="Hexapep"/>
    <property type="match status" value="1"/>
</dbReference>
<dbReference type="Pfam" id="PF04613">
    <property type="entry name" value="LpxD"/>
    <property type="match status" value="1"/>
</dbReference>
<dbReference type="SUPFAM" id="SSF51161">
    <property type="entry name" value="Trimeric LpxA-like enzymes"/>
    <property type="match status" value="1"/>
</dbReference>
<dbReference type="PROSITE" id="PS00101">
    <property type="entry name" value="HEXAPEP_TRANSFERASES"/>
    <property type="match status" value="1"/>
</dbReference>
<reference key="1">
    <citation type="journal article" date="2008" name="BMC Genomics">
        <title>Genomics of an extreme psychrophile, Psychromonas ingrahamii.</title>
        <authorList>
            <person name="Riley M."/>
            <person name="Staley J.T."/>
            <person name="Danchin A."/>
            <person name="Wang T.Z."/>
            <person name="Brettin T.S."/>
            <person name="Hauser L.J."/>
            <person name="Land M.L."/>
            <person name="Thompson L.S."/>
        </authorList>
    </citation>
    <scope>NUCLEOTIDE SEQUENCE [LARGE SCALE GENOMIC DNA]</scope>
    <source>
        <strain>DSM 17664 / CCUG 51855 / 37</strain>
    </source>
</reference>
<evidence type="ECO:0000255" key="1">
    <source>
        <dbReference type="HAMAP-Rule" id="MF_00523"/>
    </source>
</evidence>
<comment type="function">
    <text evidence="1">Catalyzes the N-acylation of UDP-3-O-acylglucosamine using 3-hydroxyacyl-ACP as the acyl donor. Is involved in the biosynthesis of lipid A, a phosphorylated glycolipid that anchors the lipopolysaccharide to the outer membrane of the cell.</text>
</comment>
<comment type="catalytic activity">
    <reaction evidence="1">
        <text>a UDP-3-O-[(3R)-3-hydroxyacyl]-alpha-D-glucosamine + a (3R)-hydroxyacyl-[ACP] = a UDP-2-N,3-O-bis[(3R)-3-hydroxyacyl]-alpha-D-glucosamine + holo-[ACP] + H(+)</text>
        <dbReference type="Rhea" id="RHEA:53836"/>
        <dbReference type="Rhea" id="RHEA-COMP:9685"/>
        <dbReference type="Rhea" id="RHEA-COMP:9945"/>
        <dbReference type="ChEBI" id="CHEBI:15378"/>
        <dbReference type="ChEBI" id="CHEBI:64479"/>
        <dbReference type="ChEBI" id="CHEBI:78827"/>
        <dbReference type="ChEBI" id="CHEBI:137740"/>
        <dbReference type="ChEBI" id="CHEBI:137748"/>
        <dbReference type="EC" id="2.3.1.191"/>
    </reaction>
</comment>
<comment type="pathway">
    <text evidence="1">Bacterial outer membrane biogenesis; LPS lipid A biosynthesis.</text>
</comment>
<comment type="subunit">
    <text evidence="1">Homotrimer.</text>
</comment>
<comment type="similarity">
    <text evidence="1">Belongs to the transferase hexapeptide repeat family. LpxD subfamily.</text>
</comment>
<organism>
    <name type="scientific">Psychromonas ingrahamii (strain DSM 17664 / CCUG 51855 / 37)</name>
    <dbReference type="NCBI Taxonomy" id="357804"/>
    <lineage>
        <taxon>Bacteria</taxon>
        <taxon>Pseudomonadati</taxon>
        <taxon>Pseudomonadota</taxon>
        <taxon>Gammaproteobacteria</taxon>
        <taxon>Alteromonadales</taxon>
        <taxon>Psychromonadaceae</taxon>
        <taxon>Psychromonas</taxon>
    </lineage>
</organism>
<sequence length="340" mass="36274">MVYNLGQLAQQLNAQLVGDAELNIYRLATFEKAAQGDITFVSDKNLLTRLDECNASAIVLPNSFKQGYQGNALFMETPYVGYALLARIFDTTPNPQPAIAASAQIHKNAIIGQNVTIAHNVVIEEGVVIGDNCQIMDNVVIGQYSTLGENTRIYPNATLYHQTELGKRCIIHANAVIGSDGFGNAPYQGTWIKIPQIGKVIIGDDVEIGASTTIDRGGLSDTLIANGVKIDNQCQIAHNVSIGAHTAIAGGSNVAGSTKIGSNCIVGGCVAINGHITIVDNVVVTGDSMVMRSITEPGIYSSGVPAQKNKAWRKTTAHTLKIDDLFKRVKALEKQLKDNT</sequence>
<protein>
    <recommendedName>
        <fullName evidence="1">UDP-3-O-acylglucosamine N-acyltransferase</fullName>
        <ecNumber evidence="1">2.3.1.191</ecNumber>
    </recommendedName>
</protein>
<proteinExistence type="inferred from homology"/>
<gene>
    <name evidence="1" type="primary">lpxD</name>
    <name type="ordered locus">Ping_2966</name>
</gene>
<name>LPXD_PSYIN</name>
<feature type="chain" id="PRO_1000050955" description="UDP-3-O-acylglucosamine N-acyltransferase">
    <location>
        <begin position="1"/>
        <end position="340"/>
    </location>
</feature>
<feature type="active site" description="Proton acceptor" evidence="1">
    <location>
        <position position="238"/>
    </location>
</feature>
<keyword id="KW-0012">Acyltransferase</keyword>
<keyword id="KW-0441">Lipid A biosynthesis</keyword>
<keyword id="KW-0444">Lipid biosynthesis</keyword>
<keyword id="KW-0443">Lipid metabolism</keyword>
<keyword id="KW-1185">Reference proteome</keyword>
<keyword id="KW-0677">Repeat</keyword>
<keyword id="KW-0808">Transferase</keyword>
<accession>A1SYV3</accession>